<gene>
    <name evidence="1" type="primary">dnaG</name>
</gene>
<reference key="1">
    <citation type="submission" date="1997-03" db="EMBL/GenBank/DDBJ databases">
        <title>Sigma70 operon in Staphylococcus aureus.</title>
        <authorList>
            <person name="Owada J."/>
            <person name="Ideno H."/>
            <person name="Ohta T."/>
        </authorList>
    </citation>
    <scope>NUCLEOTIDE SEQUENCE [GENOMIC DNA]</scope>
    <source>
        <strain>912</strain>
    </source>
</reference>
<comment type="function">
    <text evidence="1">RNA polymerase that catalyzes the synthesis of short RNA molecules used as primers for DNA polymerase during DNA replication.</text>
</comment>
<comment type="catalytic activity">
    <reaction evidence="1">
        <text>ssDNA + n NTP = ssDNA/pppN(pN)n-1 hybrid + (n-1) diphosphate.</text>
        <dbReference type="EC" id="2.7.7.101"/>
    </reaction>
</comment>
<comment type="cofactor">
    <cofactor evidence="1">
        <name>Zn(2+)</name>
        <dbReference type="ChEBI" id="CHEBI:29105"/>
    </cofactor>
    <text evidence="1">Binds 1 zinc ion per monomer.</text>
</comment>
<comment type="cofactor">
    <cofactor evidence="1">
        <name>Mg(2+)</name>
        <dbReference type="ChEBI" id="CHEBI:18420"/>
    </cofactor>
    <text evidence="1">Binds two Mg(2+) per subunit.</text>
</comment>
<comment type="subunit">
    <text evidence="1">Monomer. Interacts with DnaB.</text>
</comment>
<comment type="domain">
    <text evidence="1">Contains an N-terminal zinc-binding domain, a central core domain that contains the primase activity, and a C-terminal DnaB-binding domain.</text>
</comment>
<comment type="similarity">
    <text evidence="1">Belongs to the DnaG primase family.</text>
</comment>
<comment type="sequence caution" evidence="2">
    <conflict type="frameshift">
        <sequence resource="EMBL-CDS" id="BAA19493"/>
    </conflict>
</comment>
<keyword id="KW-0002">3D-structure</keyword>
<keyword id="KW-0235">DNA replication</keyword>
<keyword id="KW-0238">DNA-binding</keyword>
<keyword id="KW-0240">DNA-directed RNA polymerase</keyword>
<keyword id="KW-0460">Magnesium</keyword>
<keyword id="KW-0479">Metal-binding</keyword>
<keyword id="KW-0548">Nucleotidyltransferase</keyword>
<keyword id="KW-0639">Primosome</keyword>
<keyword id="KW-0804">Transcription</keyword>
<keyword id="KW-0808">Transferase</keyword>
<keyword id="KW-0862">Zinc</keyword>
<keyword id="KW-0863">Zinc-finger</keyword>
<feature type="chain" id="PRO_0000180523" description="DNA primase">
    <location>
        <begin position="1"/>
        <end position="605"/>
    </location>
</feature>
<feature type="domain" description="Toprim" evidence="1">
    <location>
        <begin position="260"/>
        <end position="341"/>
    </location>
</feature>
<feature type="zinc finger region" description="CHC2-type" evidence="1">
    <location>
        <begin position="38"/>
        <end position="62"/>
    </location>
</feature>
<feature type="binding site" evidence="1">
    <location>
        <position position="266"/>
    </location>
    <ligand>
        <name>Mg(2+)</name>
        <dbReference type="ChEBI" id="CHEBI:18420"/>
        <label>1</label>
        <note>catalytic</note>
    </ligand>
</feature>
<feature type="binding site" evidence="1">
    <location>
        <position position="310"/>
    </location>
    <ligand>
        <name>Mg(2+)</name>
        <dbReference type="ChEBI" id="CHEBI:18420"/>
        <label>1</label>
        <note>catalytic</note>
    </ligand>
</feature>
<feature type="binding site" evidence="1">
    <location>
        <position position="310"/>
    </location>
    <ligand>
        <name>Mg(2+)</name>
        <dbReference type="ChEBI" id="CHEBI:18420"/>
        <label>2</label>
    </ligand>
</feature>
<feature type="binding site" evidence="1">
    <location>
        <position position="312"/>
    </location>
    <ligand>
        <name>Mg(2+)</name>
        <dbReference type="ChEBI" id="CHEBI:18420"/>
        <label>2</label>
    </ligand>
</feature>
<feature type="helix" evidence="3">
    <location>
        <begin position="111"/>
        <end position="132"/>
    </location>
</feature>
<feature type="helix" evidence="3">
    <location>
        <begin position="137"/>
        <end position="145"/>
    </location>
</feature>
<feature type="helix" evidence="3">
    <location>
        <begin position="150"/>
        <end position="156"/>
    </location>
</feature>
<feature type="strand" evidence="3">
    <location>
        <begin position="159"/>
        <end position="161"/>
    </location>
</feature>
<feature type="strand" evidence="3">
    <location>
        <begin position="163"/>
        <end position="165"/>
    </location>
</feature>
<feature type="helix" evidence="3">
    <location>
        <begin position="167"/>
        <end position="174"/>
    </location>
</feature>
<feature type="helix" evidence="3">
    <location>
        <begin position="179"/>
        <end position="184"/>
    </location>
</feature>
<feature type="strand" evidence="3">
    <location>
        <begin position="187"/>
        <end position="190"/>
    </location>
</feature>
<feature type="turn" evidence="3">
    <location>
        <begin position="192"/>
        <end position="194"/>
    </location>
</feature>
<feature type="strand" evidence="3">
    <location>
        <begin position="197"/>
        <end position="200"/>
    </location>
</feature>
<feature type="strand" evidence="3">
    <location>
        <begin position="203"/>
        <end position="210"/>
    </location>
</feature>
<feature type="strand" evidence="3">
    <location>
        <begin position="216"/>
        <end position="222"/>
    </location>
</feature>
<feature type="strand" evidence="3">
    <location>
        <begin position="224"/>
        <end position="226"/>
    </location>
</feature>
<feature type="strand" evidence="3">
    <location>
        <begin position="228"/>
        <end position="233"/>
    </location>
</feature>
<feature type="turn" evidence="3">
    <location>
        <begin position="242"/>
        <end position="244"/>
    </location>
</feature>
<feature type="helix" evidence="3">
    <location>
        <begin position="249"/>
        <end position="259"/>
    </location>
</feature>
<feature type="strand" evidence="3">
    <location>
        <begin position="262"/>
        <end position="266"/>
    </location>
</feature>
<feature type="helix" evidence="3">
    <location>
        <begin position="268"/>
        <end position="277"/>
    </location>
</feature>
<feature type="strand" evidence="3">
    <location>
        <begin position="281"/>
        <end position="284"/>
    </location>
</feature>
<feature type="strand" evidence="3">
    <location>
        <begin position="286"/>
        <end position="288"/>
    </location>
</feature>
<feature type="helix" evidence="3">
    <location>
        <begin position="292"/>
        <end position="299"/>
    </location>
</feature>
<feature type="strand" evidence="3">
    <location>
        <begin position="303"/>
        <end position="308"/>
    </location>
</feature>
<feature type="helix" evidence="3">
    <location>
        <begin position="313"/>
        <end position="328"/>
    </location>
</feature>
<feature type="strand" evidence="3">
    <location>
        <begin position="332"/>
        <end position="336"/>
    </location>
</feature>
<feature type="helix" evidence="3">
    <location>
        <begin position="344"/>
        <end position="351"/>
    </location>
</feature>
<feature type="helix" evidence="3">
    <location>
        <begin position="353"/>
        <end position="362"/>
    </location>
</feature>
<feature type="strand" evidence="3">
    <location>
        <begin position="364"/>
        <end position="366"/>
    </location>
</feature>
<feature type="helix" evidence="3">
    <location>
        <begin position="367"/>
        <end position="374"/>
    </location>
</feature>
<feature type="helix" evidence="3">
    <location>
        <begin position="376"/>
        <end position="381"/>
    </location>
</feature>
<feature type="helix" evidence="3">
    <location>
        <begin position="383"/>
        <end position="399"/>
    </location>
</feature>
<feature type="helix" evidence="3">
    <location>
        <begin position="403"/>
        <end position="413"/>
    </location>
</feature>
<feature type="helix" evidence="3">
    <location>
        <begin position="414"/>
        <end position="417"/>
    </location>
</feature>
<feature type="helix" evidence="3">
    <location>
        <begin position="421"/>
        <end position="427"/>
    </location>
</feature>
<evidence type="ECO:0000255" key="1">
    <source>
        <dbReference type="HAMAP-Rule" id="MF_00974"/>
    </source>
</evidence>
<evidence type="ECO:0000305" key="2"/>
<evidence type="ECO:0007829" key="3">
    <source>
        <dbReference type="PDB" id="4EDK"/>
    </source>
</evidence>
<dbReference type="EC" id="2.7.7.101" evidence="1"/>
<dbReference type="EMBL" id="AB001896">
    <property type="protein sequence ID" value="BAA19493.1"/>
    <property type="status" value="ALT_FRAME"/>
    <property type="molecule type" value="Genomic_DNA"/>
</dbReference>
<dbReference type="PDB" id="4E2K">
    <property type="method" value="X-ray"/>
    <property type="resolution" value="2.15 A"/>
    <property type="chains" value="A=111-436"/>
</dbReference>
<dbReference type="PDB" id="4EDG">
    <property type="method" value="X-ray"/>
    <property type="resolution" value="2.00 A"/>
    <property type="chains" value="A=111-436"/>
</dbReference>
<dbReference type="PDB" id="4EDK">
    <property type="method" value="X-ray"/>
    <property type="resolution" value="2.00 A"/>
    <property type="chains" value="A=111-436"/>
</dbReference>
<dbReference type="PDB" id="4EDR">
    <property type="method" value="X-ray"/>
    <property type="resolution" value="2.01 A"/>
    <property type="chains" value="A=111-436"/>
</dbReference>
<dbReference type="PDB" id="4EDT">
    <property type="method" value="X-ray"/>
    <property type="resolution" value="2.00 A"/>
    <property type="chains" value="A=111-436"/>
</dbReference>
<dbReference type="PDB" id="4EDV">
    <property type="method" value="X-ray"/>
    <property type="resolution" value="2.01 A"/>
    <property type="chains" value="A=111-436"/>
</dbReference>
<dbReference type="PDB" id="4EE1">
    <property type="method" value="X-ray"/>
    <property type="resolution" value="2.02 A"/>
    <property type="chains" value="A=111-436"/>
</dbReference>
<dbReference type="PDBsum" id="4E2K"/>
<dbReference type="PDBsum" id="4EDG"/>
<dbReference type="PDBsum" id="4EDK"/>
<dbReference type="PDBsum" id="4EDR"/>
<dbReference type="PDBsum" id="4EDT"/>
<dbReference type="PDBsum" id="4EDV"/>
<dbReference type="PDBsum" id="4EE1"/>
<dbReference type="BMRB" id="O05338"/>
<dbReference type="SMR" id="O05338"/>
<dbReference type="BRENDA" id="2.7.7.101">
    <property type="organism ID" value="3352"/>
</dbReference>
<dbReference type="EvolutionaryTrace" id="O05338"/>
<dbReference type="GO" id="GO:0005737">
    <property type="term" value="C:cytoplasm"/>
    <property type="evidence" value="ECO:0007669"/>
    <property type="project" value="TreeGrafter"/>
</dbReference>
<dbReference type="GO" id="GO:0000428">
    <property type="term" value="C:DNA-directed RNA polymerase complex"/>
    <property type="evidence" value="ECO:0007669"/>
    <property type="project" value="UniProtKB-KW"/>
</dbReference>
<dbReference type="GO" id="GO:1990077">
    <property type="term" value="C:primosome complex"/>
    <property type="evidence" value="ECO:0007669"/>
    <property type="project" value="UniProtKB-KW"/>
</dbReference>
<dbReference type="GO" id="GO:0005524">
    <property type="term" value="F:ATP binding"/>
    <property type="evidence" value="ECO:0007669"/>
    <property type="project" value="InterPro"/>
</dbReference>
<dbReference type="GO" id="GO:0003677">
    <property type="term" value="F:DNA binding"/>
    <property type="evidence" value="ECO:0007669"/>
    <property type="project" value="UniProtKB-KW"/>
</dbReference>
<dbReference type="GO" id="GO:0003678">
    <property type="term" value="F:DNA helicase activity"/>
    <property type="evidence" value="ECO:0007669"/>
    <property type="project" value="InterPro"/>
</dbReference>
<dbReference type="GO" id="GO:0003899">
    <property type="term" value="F:DNA-directed RNA polymerase activity"/>
    <property type="evidence" value="ECO:0007669"/>
    <property type="project" value="InterPro"/>
</dbReference>
<dbReference type="GO" id="GO:0008270">
    <property type="term" value="F:zinc ion binding"/>
    <property type="evidence" value="ECO:0007669"/>
    <property type="project" value="UniProtKB-UniRule"/>
</dbReference>
<dbReference type="GO" id="GO:0006269">
    <property type="term" value="P:DNA replication, synthesis of primer"/>
    <property type="evidence" value="ECO:0007669"/>
    <property type="project" value="UniProtKB-UniRule"/>
</dbReference>
<dbReference type="CDD" id="cd03364">
    <property type="entry name" value="TOPRIM_DnaG_primases"/>
    <property type="match status" value="1"/>
</dbReference>
<dbReference type="FunFam" id="3.90.580.10:FF:000001">
    <property type="entry name" value="DNA primase"/>
    <property type="match status" value="1"/>
</dbReference>
<dbReference type="FunFam" id="3.90.980.10:FF:000001">
    <property type="entry name" value="DNA primase"/>
    <property type="match status" value="1"/>
</dbReference>
<dbReference type="Gene3D" id="3.40.1360.10">
    <property type="match status" value="1"/>
</dbReference>
<dbReference type="Gene3D" id="3.90.980.10">
    <property type="entry name" value="DNA primase, catalytic core, N-terminal domain"/>
    <property type="match status" value="1"/>
</dbReference>
<dbReference type="Gene3D" id="1.10.860.10">
    <property type="entry name" value="DNAb Helicase, Chain A"/>
    <property type="match status" value="1"/>
</dbReference>
<dbReference type="Gene3D" id="1.20.50.20">
    <property type="entry name" value="DnaG, RNA polymerase domain, helical bundle"/>
    <property type="match status" value="1"/>
</dbReference>
<dbReference type="Gene3D" id="3.90.580.10">
    <property type="entry name" value="Zinc finger, CHC2-type domain"/>
    <property type="match status" value="1"/>
</dbReference>
<dbReference type="HAMAP" id="MF_00974">
    <property type="entry name" value="DNA_primase_DnaG"/>
    <property type="match status" value="1"/>
</dbReference>
<dbReference type="InterPro" id="IPR036185">
    <property type="entry name" value="DNA_heli_DnaB-like_N_sf"/>
</dbReference>
<dbReference type="InterPro" id="IPR007693">
    <property type="entry name" value="DNA_helicase_DnaB-like_N"/>
</dbReference>
<dbReference type="InterPro" id="IPR016136">
    <property type="entry name" value="DNA_helicase_N/primase_C"/>
</dbReference>
<dbReference type="InterPro" id="IPR037068">
    <property type="entry name" value="DNA_primase_core_N_sf"/>
</dbReference>
<dbReference type="InterPro" id="IPR006295">
    <property type="entry name" value="DNA_primase_DnaG"/>
</dbReference>
<dbReference type="InterPro" id="IPR036977">
    <property type="entry name" value="DNA_primase_Znf_CHC2"/>
</dbReference>
<dbReference type="InterPro" id="IPR030846">
    <property type="entry name" value="DnaG_bac"/>
</dbReference>
<dbReference type="InterPro" id="IPR048453">
    <property type="entry name" value="DnaG_cat_HB"/>
</dbReference>
<dbReference type="InterPro" id="IPR013264">
    <property type="entry name" value="DNAG_N"/>
</dbReference>
<dbReference type="InterPro" id="IPR050219">
    <property type="entry name" value="DnaG_primase"/>
</dbReference>
<dbReference type="InterPro" id="IPR034151">
    <property type="entry name" value="TOPRIM_DnaG_bac"/>
</dbReference>
<dbReference type="InterPro" id="IPR006171">
    <property type="entry name" value="TOPRIM_dom"/>
</dbReference>
<dbReference type="InterPro" id="IPR002694">
    <property type="entry name" value="Znf_CHC2"/>
</dbReference>
<dbReference type="NCBIfam" id="TIGR01391">
    <property type="entry name" value="dnaG"/>
    <property type="match status" value="1"/>
</dbReference>
<dbReference type="PANTHER" id="PTHR30313">
    <property type="entry name" value="DNA PRIMASE"/>
    <property type="match status" value="1"/>
</dbReference>
<dbReference type="PANTHER" id="PTHR30313:SF2">
    <property type="entry name" value="DNA PRIMASE"/>
    <property type="match status" value="1"/>
</dbReference>
<dbReference type="Pfam" id="PF00772">
    <property type="entry name" value="DnaB"/>
    <property type="match status" value="1"/>
</dbReference>
<dbReference type="Pfam" id="PF21650">
    <property type="entry name" value="DnaG_cat_HB"/>
    <property type="match status" value="1"/>
</dbReference>
<dbReference type="Pfam" id="PF08275">
    <property type="entry name" value="DNAG_N"/>
    <property type="match status" value="1"/>
</dbReference>
<dbReference type="Pfam" id="PF13155">
    <property type="entry name" value="Toprim_2"/>
    <property type="match status" value="1"/>
</dbReference>
<dbReference type="Pfam" id="PF01807">
    <property type="entry name" value="Zn_ribbon_DnaG"/>
    <property type="match status" value="1"/>
</dbReference>
<dbReference type="PIRSF" id="PIRSF002811">
    <property type="entry name" value="DnaG"/>
    <property type="match status" value="1"/>
</dbReference>
<dbReference type="SMART" id="SM00493">
    <property type="entry name" value="TOPRIM"/>
    <property type="match status" value="1"/>
</dbReference>
<dbReference type="SMART" id="SM00400">
    <property type="entry name" value="ZnF_CHCC"/>
    <property type="match status" value="1"/>
</dbReference>
<dbReference type="SUPFAM" id="SSF56731">
    <property type="entry name" value="DNA primase core"/>
    <property type="match status" value="1"/>
</dbReference>
<dbReference type="SUPFAM" id="SSF48024">
    <property type="entry name" value="N-terminal domain of DnaB helicase"/>
    <property type="match status" value="1"/>
</dbReference>
<dbReference type="SUPFAM" id="SSF57783">
    <property type="entry name" value="Zinc beta-ribbon"/>
    <property type="match status" value="1"/>
</dbReference>
<dbReference type="PROSITE" id="PS50880">
    <property type="entry name" value="TOPRIM"/>
    <property type="match status" value="1"/>
</dbReference>
<sequence length="605" mass="70002">MRIDQSIINEIKDKTDILDLVSEYVKLEKRGRNYIGLCPFHDEKTPSFTVSEDKQICHCFGCKKGGNVFQFTQEIKDISFVEAVKELGDRVNVAVDIEATQSNSNVQIASDDLQMIEMHELIQEFYYYALTKTVEGEQALTYLQERGFTDALIKERGIGFAPDSSHFCHDFLQKKGYDIELAYEAGLLSRNEENFSYYDRFRNRIMFPLKNAQGRIVGYSGRTYTGQEPKYLNSPETPIFQKRKLLYNLDKARKSIRKLDEIVLLEGFMDVIKSDTAGLKNVVATMGTQLSDEHITFIRKLTSNITLMFDGDFAGSEATLKTGQHLLQQGLNVFVIQLPSGMDPDEYIGKYGNDAFTTFVKNDKKSFAHYKVSILKDEIAHNDLSYERYLKELSHDISLMKSSILQQKAINDVAPFFNVSPEQLANEIQFNQAPANYYPEDEYGGYDEYGGYIEPEPIGMAQFDNLSRREKAERAFLKHLMRDKDTFLNYYESVDKDNFTNQHFKYVFEVLHDFYAENDQYNISDAVQYVNSNELRETLISLEQYNLNGEPYENEIDDYVNVINEKGQETIESLNHKLREATRIGDVELQKYYLQQIVAKNKERM</sequence>
<name>DNAG_STAAU</name>
<protein>
    <recommendedName>
        <fullName evidence="1">DNA primase</fullName>
        <ecNumber evidence="1">2.7.7.101</ecNumber>
    </recommendedName>
</protein>
<organism>
    <name type="scientific">Staphylococcus aureus</name>
    <dbReference type="NCBI Taxonomy" id="1280"/>
    <lineage>
        <taxon>Bacteria</taxon>
        <taxon>Bacillati</taxon>
        <taxon>Bacillota</taxon>
        <taxon>Bacilli</taxon>
        <taxon>Bacillales</taxon>
        <taxon>Staphylococcaceae</taxon>
        <taxon>Staphylococcus</taxon>
    </lineage>
</organism>
<proteinExistence type="evidence at protein level"/>
<accession>O05338</accession>